<keyword id="KW-0046">Antibiotic resistance</keyword>
<keyword id="KW-1003">Cell membrane</keyword>
<keyword id="KW-0133">Cell shape</keyword>
<keyword id="KW-0961">Cell wall biogenesis/degradation</keyword>
<keyword id="KW-0378">Hydrolase</keyword>
<keyword id="KW-0472">Membrane</keyword>
<keyword id="KW-0573">Peptidoglycan synthesis</keyword>
<keyword id="KW-1185">Reference proteome</keyword>
<keyword id="KW-0812">Transmembrane</keyword>
<keyword id="KW-1133">Transmembrane helix</keyword>
<name>UPPP_STRPN</name>
<proteinExistence type="inferred from homology"/>
<accession>P60934</accession>
<accession>Q97SC8</accession>
<comment type="function">
    <text evidence="1 3">Catalyzes the dephosphorylation of undecaprenyl diphosphate (UPP) (By similarity). Confers resistance to bacitracin. Is also required for virulence.</text>
</comment>
<comment type="catalytic activity">
    <reaction>
        <text>di-trans,octa-cis-undecaprenyl diphosphate + H2O = di-trans,octa-cis-undecaprenyl phosphate + phosphate + H(+)</text>
        <dbReference type="Rhea" id="RHEA:28094"/>
        <dbReference type="ChEBI" id="CHEBI:15377"/>
        <dbReference type="ChEBI" id="CHEBI:15378"/>
        <dbReference type="ChEBI" id="CHEBI:43474"/>
        <dbReference type="ChEBI" id="CHEBI:58405"/>
        <dbReference type="ChEBI" id="CHEBI:60392"/>
        <dbReference type="EC" id="3.6.1.27"/>
    </reaction>
</comment>
<comment type="subcellular location">
    <subcellularLocation>
        <location evidence="1">Cell membrane</location>
        <topology evidence="1">Multi-pass membrane protein</topology>
    </subcellularLocation>
</comment>
<comment type="miscellaneous">
    <text>Bacitracin is thought to be involved in the inhibition of peptidoglycan synthesis by sequestering undecaprenyl diphosphate, thereby reducing the pool of lipid carrier available.</text>
</comment>
<comment type="similarity">
    <text evidence="4">Belongs to the UppP family.</text>
</comment>
<reference key="1">
    <citation type="journal article" date="2001" name="Science">
        <title>Complete genome sequence of a virulent isolate of Streptococcus pneumoniae.</title>
        <authorList>
            <person name="Tettelin H."/>
            <person name="Nelson K.E."/>
            <person name="Paulsen I.T."/>
            <person name="Eisen J.A."/>
            <person name="Read T.D."/>
            <person name="Peterson S.N."/>
            <person name="Heidelberg J.F."/>
            <person name="DeBoy R.T."/>
            <person name="Haft D.H."/>
            <person name="Dodson R.J."/>
            <person name="Durkin A.S."/>
            <person name="Gwinn M.L."/>
            <person name="Kolonay J.F."/>
            <person name="Nelson W.C."/>
            <person name="Peterson J.D."/>
            <person name="Umayam L.A."/>
            <person name="White O."/>
            <person name="Salzberg S.L."/>
            <person name="Lewis M.R."/>
            <person name="Radune D."/>
            <person name="Holtzapple E.K."/>
            <person name="Khouri H.M."/>
            <person name="Wolf A.M."/>
            <person name="Utterback T.R."/>
            <person name="Hansen C.L."/>
            <person name="McDonald L.A."/>
            <person name="Feldblyum T.V."/>
            <person name="Angiuoli S.V."/>
            <person name="Dickinson T."/>
            <person name="Hickey E.K."/>
            <person name="Holt I.E."/>
            <person name="Loftus B.J."/>
            <person name="Yang F."/>
            <person name="Smith H.O."/>
            <person name="Venter J.C."/>
            <person name="Dougherty B.A."/>
            <person name="Morrison D.A."/>
            <person name="Hollingshead S.K."/>
            <person name="Fraser C.M."/>
        </authorList>
    </citation>
    <scope>NUCLEOTIDE SEQUENCE [LARGE SCALE GENOMIC DNA]</scope>
    <source>
        <strain>ATCC BAA-334 / TIGR4</strain>
    </source>
</reference>
<reference key="2">
    <citation type="journal article" date="2000" name="Microbiology">
        <title>The bacA gene, which determines bacitracin susceptibility in Streptococcus pneumoniae and Staphylococcus aureus, is also required for virulence.</title>
        <authorList>
            <person name="Chalker A.F."/>
            <person name="Ingraham K.A."/>
            <person name="Lunsford R.D."/>
            <person name="Bryant A.P."/>
            <person name="Bryant J."/>
            <person name="Wallis N.G."/>
            <person name="Broskey J.P."/>
            <person name="Pearson S.C."/>
            <person name="Holmes D.J."/>
        </authorList>
    </citation>
    <scope>FUNCTION</scope>
    <source>
        <strain>0100993 / NCIMB 40794 / Serotype 3</strain>
    </source>
</reference>
<dbReference type="EC" id="3.6.1.27"/>
<dbReference type="EMBL" id="AE005672">
    <property type="protein sequence ID" value="AAK74617.1"/>
    <property type="molecule type" value="Genomic_DNA"/>
</dbReference>
<dbReference type="PIR" id="H95052">
    <property type="entry name" value="H95052"/>
</dbReference>
<dbReference type="RefSeq" id="WP_000280773.1">
    <property type="nucleotide sequence ID" value="NZ_CP155539.1"/>
</dbReference>
<dbReference type="SMR" id="P60934"/>
<dbReference type="PaxDb" id="170187-SP_0457"/>
<dbReference type="EnsemblBacteria" id="AAK74617">
    <property type="protein sequence ID" value="AAK74617"/>
    <property type="gene ID" value="SP_0457"/>
</dbReference>
<dbReference type="KEGG" id="spn:SP_0457"/>
<dbReference type="eggNOG" id="COG1968">
    <property type="taxonomic scope" value="Bacteria"/>
</dbReference>
<dbReference type="PhylomeDB" id="P60934"/>
<dbReference type="BioCyc" id="SPNE170187:G1FZB-472-MONOMER"/>
<dbReference type="Proteomes" id="UP000000585">
    <property type="component" value="Chromosome"/>
</dbReference>
<dbReference type="GO" id="GO:0005886">
    <property type="term" value="C:plasma membrane"/>
    <property type="evidence" value="ECO:0007669"/>
    <property type="project" value="UniProtKB-SubCell"/>
</dbReference>
<dbReference type="GO" id="GO:0050380">
    <property type="term" value="F:undecaprenyl-diphosphatase activity"/>
    <property type="evidence" value="ECO:0007669"/>
    <property type="project" value="UniProtKB-UniRule"/>
</dbReference>
<dbReference type="GO" id="GO:0071555">
    <property type="term" value="P:cell wall organization"/>
    <property type="evidence" value="ECO:0007669"/>
    <property type="project" value="UniProtKB-KW"/>
</dbReference>
<dbReference type="GO" id="GO:0009252">
    <property type="term" value="P:peptidoglycan biosynthetic process"/>
    <property type="evidence" value="ECO:0007669"/>
    <property type="project" value="UniProtKB-KW"/>
</dbReference>
<dbReference type="GO" id="GO:0008360">
    <property type="term" value="P:regulation of cell shape"/>
    <property type="evidence" value="ECO:0007669"/>
    <property type="project" value="UniProtKB-KW"/>
</dbReference>
<dbReference type="GO" id="GO:0046677">
    <property type="term" value="P:response to antibiotic"/>
    <property type="evidence" value="ECO:0007669"/>
    <property type="project" value="UniProtKB-UniRule"/>
</dbReference>
<dbReference type="HAMAP" id="MF_01006">
    <property type="entry name" value="Undec_diphosphatase"/>
    <property type="match status" value="1"/>
</dbReference>
<dbReference type="InterPro" id="IPR003824">
    <property type="entry name" value="UppP"/>
</dbReference>
<dbReference type="NCBIfam" id="NF001391">
    <property type="entry name" value="PRK00281.1-5"/>
    <property type="match status" value="1"/>
</dbReference>
<dbReference type="PANTHER" id="PTHR30622">
    <property type="entry name" value="UNDECAPRENYL-DIPHOSPHATASE"/>
    <property type="match status" value="1"/>
</dbReference>
<dbReference type="PANTHER" id="PTHR30622:SF3">
    <property type="entry name" value="UNDECAPRENYL-DIPHOSPHATASE"/>
    <property type="match status" value="1"/>
</dbReference>
<dbReference type="Pfam" id="PF02673">
    <property type="entry name" value="BacA"/>
    <property type="match status" value="1"/>
</dbReference>
<protein>
    <recommendedName>
        <fullName>Undecaprenyl-diphosphatase</fullName>
        <ecNumber>3.6.1.27</ecNumber>
    </recommendedName>
    <alternativeName>
        <fullName>Bacitracin resistance protein</fullName>
    </alternativeName>
    <alternativeName>
        <fullName>Undecaprenyl pyrophosphate phosphatase</fullName>
    </alternativeName>
</protein>
<feature type="chain" id="PRO_0000151214" description="Undecaprenyl-diphosphatase">
    <location>
        <begin position="1"/>
        <end position="281"/>
    </location>
</feature>
<feature type="transmembrane region" description="Helical" evidence="2">
    <location>
        <begin position="4"/>
        <end position="24"/>
    </location>
</feature>
<feature type="transmembrane region" description="Helical" evidence="2">
    <location>
        <begin position="45"/>
        <end position="65"/>
    </location>
</feature>
<feature type="transmembrane region" description="Helical" evidence="2">
    <location>
        <begin position="89"/>
        <end position="109"/>
    </location>
</feature>
<feature type="transmembrane region" description="Helical" evidence="2">
    <location>
        <begin position="113"/>
        <end position="133"/>
    </location>
</feature>
<feature type="transmembrane region" description="Helical" evidence="2">
    <location>
        <begin position="152"/>
        <end position="172"/>
    </location>
</feature>
<feature type="transmembrane region" description="Helical" evidence="2">
    <location>
        <begin position="190"/>
        <end position="210"/>
    </location>
</feature>
<feature type="transmembrane region" description="Helical" evidence="2">
    <location>
        <begin position="225"/>
        <end position="245"/>
    </location>
</feature>
<feature type="transmembrane region" description="Helical" evidence="2">
    <location>
        <begin position="257"/>
        <end position="277"/>
    </location>
</feature>
<sequence>MYLIEILKSIFFGIVEGITEWLPISSTGHLILAEEFIQYQNQNEAFMSMFNVVIQLGAILAVMVIYFNKLNPFKPTKDKQEVRKTWRLWLKVLIATLPLLGVFKFDDWFDTHFHNMVSVALMLIIYGVAFIYLEKRNKARAIEPSVTELDKLPYTTAFYIGLFQVLALLPGTSRSGATIVGGLLNGTSRSVVTEFTFYLGIPVMFGASALKIFKFVKAGELLSFGQLFLLLVAMGVAFAVSMVAIRFLTSYVKKHDFTLFGKYRIVLGSVLLLYSFVRLFV</sequence>
<evidence type="ECO:0000250" key="1"/>
<evidence type="ECO:0000255" key="2"/>
<evidence type="ECO:0000269" key="3">
    <source>
    </source>
</evidence>
<evidence type="ECO:0000305" key="4"/>
<gene>
    <name type="primary">uppP</name>
    <name type="synonym">bacA</name>
    <name type="synonym">upk</name>
    <name type="ordered locus">SP_0457</name>
</gene>
<organism>
    <name type="scientific">Streptococcus pneumoniae serotype 4 (strain ATCC BAA-334 / TIGR4)</name>
    <dbReference type="NCBI Taxonomy" id="170187"/>
    <lineage>
        <taxon>Bacteria</taxon>
        <taxon>Bacillati</taxon>
        <taxon>Bacillota</taxon>
        <taxon>Bacilli</taxon>
        <taxon>Lactobacillales</taxon>
        <taxon>Streptococcaceae</taxon>
        <taxon>Streptococcus</taxon>
    </lineage>
</organism>